<reference key="1">
    <citation type="submission" date="2008-02" db="EMBL/GenBank/DDBJ databases">
        <title>Complete sequence of Yersinia pseudotuberculosis YPIII.</title>
        <authorList>
            <consortium name="US DOE Joint Genome Institute"/>
            <person name="Copeland A."/>
            <person name="Lucas S."/>
            <person name="Lapidus A."/>
            <person name="Glavina del Rio T."/>
            <person name="Dalin E."/>
            <person name="Tice H."/>
            <person name="Bruce D."/>
            <person name="Goodwin L."/>
            <person name="Pitluck S."/>
            <person name="Munk A.C."/>
            <person name="Brettin T."/>
            <person name="Detter J.C."/>
            <person name="Han C."/>
            <person name="Tapia R."/>
            <person name="Schmutz J."/>
            <person name="Larimer F."/>
            <person name="Land M."/>
            <person name="Hauser L."/>
            <person name="Challacombe J.F."/>
            <person name="Green L."/>
            <person name="Lindler L.E."/>
            <person name="Nikolich M.P."/>
            <person name="Richardson P."/>
        </authorList>
    </citation>
    <scope>NUCLEOTIDE SEQUENCE [LARGE SCALE GENOMIC DNA]</scope>
    <source>
        <strain>YPIII</strain>
    </source>
</reference>
<comment type="function">
    <text evidence="1">H(+)-stimulated, divalent metal cation uptake system.</text>
</comment>
<comment type="subcellular location">
    <subcellularLocation>
        <location evidence="1">Cell inner membrane</location>
        <topology evidence="1">Multi-pass membrane protein</topology>
    </subcellularLocation>
</comment>
<comment type="similarity">
    <text evidence="1">Belongs to the NRAMP family.</text>
</comment>
<accession>B1JFZ6</accession>
<gene>
    <name evidence="1" type="primary">mntH</name>
    <name type="ordered locus">YPK_1439</name>
</gene>
<sequence length="409" mass="43742">MLNGRAVDTSRRPLRKIKLSLMGPAFIAAIAYIDPGNFATNIQAGATFGYTLLWVVVWANVMAMLVQLLSAKLGIATGKNLAEHIRDRFPRPVVWAYWVQAEIIVMATDLAEFIGAAIGFKLLFGVTLLQGAVLTGIATFLILMLQNRGQKPLELVIGGLLLFVAAAYIVELIFSQPDIAALGRGMLIPNLPDGNAVFLAAGVLGATIMPHVIYLHSALTQTGGEESKTERYASTKFDVAIAMTIAGFVNLAMMATAAAAFHFNGYENIAEIEEAYITLQPLLGNAAATVFGLSLIAAGLSSTVVGTLAGQVVMQGFVRFYIPMWVRRIVTMLPSFIVILAGMDATQILVMSQVLLSFGIALALVPLLVFTGNKELMGELVDTKTTQILGKLVVLIVVGLNAYLLISLL</sequence>
<protein>
    <recommendedName>
        <fullName evidence="1">Divalent metal cation transporter MntH</fullName>
    </recommendedName>
</protein>
<feature type="chain" id="PRO_1000100094" description="Divalent metal cation transporter MntH">
    <location>
        <begin position="1"/>
        <end position="409"/>
    </location>
</feature>
<feature type="transmembrane region" description="Helical" evidence="1">
    <location>
        <begin position="19"/>
        <end position="39"/>
    </location>
</feature>
<feature type="transmembrane region" description="Helical" evidence="1">
    <location>
        <begin position="46"/>
        <end position="66"/>
    </location>
</feature>
<feature type="transmembrane region" description="Helical" evidence="1">
    <location>
        <begin position="98"/>
        <end position="118"/>
    </location>
</feature>
<feature type="transmembrane region" description="Helical" evidence="1">
    <location>
        <begin position="122"/>
        <end position="142"/>
    </location>
</feature>
<feature type="transmembrane region" description="Helical" evidence="1">
    <location>
        <begin position="155"/>
        <end position="175"/>
    </location>
</feature>
<feature type="transmembrane region" description="Helical" evidence="1">
    <location>
        <begin position="196"/>
        <end position="216"/>
    </location>
</feature>
<feature type="transmembrane region" description="Helical" evidence="1">
    <location>
        <begin position="241"/>
        <end position="261"/>
    </location>
</feature>
<feature type="transmembrane region" description="Helical" evidence="1">
    <location>
        <begin position="290"/>
        <end position="310"/>
    </location>
</feature>
<feature type="transmembrane region" description="Helical" evidence="1">
    <location>
        <begin position="320"/>
        <end position="340"/>
    </location>
</feature>
<feature type="transmembrane region" description="Helical" evidence="1">
    <location>
        <begin position="348"/>
        <end position="368"/>
    </location>
</feature>
<feature type="transmembrane region" description="Helical" evidence="1">
    <location>
        <begin position="388"/>
        <end position="408"/>
    </location>
</feature>
<evidence type="ECO:0000255" key="1">
    <source>
        <dbReference type="HAMAP-Rule" id="MF_00221"/>
    </source>
</evidence>
<proteinExistence type="inferred from homology"/>
<dbReference type="EMBL" id="CP000950">
    <property type="protein sequence ID" value="ACA67732.1"/>
    <property type="molecule type" value="Genomic_DNA"/>
</dbReference>
<dbReference type="RefSeq" id="WP_002211621.1">
    <property type="nucleotide sequence ID" value="NZ_CP009792.1"/>
</dbReference>
<dbReference type="SMR" id="B1JFZ6"/>
<dbReference type="KEGG" id="ypy:YPK_1439"/>
<dbReference type="PATRIC" id="fig|502800.11.peg.2076"/>
<dbReference type="GO" id="GO:0005886">
    <property type="term" value="C:plasma membrane"/>
    <property type="evidence" value="ECO:0007669"/>
    <property type="project" value="UniProtKB-SubCell"/>
</dbReference>
<dbReference type="GO" id="GO:0015086">
    <property type="term" value="F:cadmium ion transmembrane transporter activity"/>
    <property type="evidence" value="ECO:0007669"/>
    <property type="project" value="TreeGrafter"/>
</dbReference>
<dbReference type="GO" id="GO:0005384">
    <property type="term" value="F:manganese ion transmembrane transporter activity"/>
    <property type="evidence" value="ECO:0007669"/>
    <property type="project" value="TreeGrafter"/>
</dbReference>
<dbReference type="GO" id="GO:0046872">
    <property type="term" value="F:metal ion binding"/>
    <property type="evidence" value="ECO:0007669"/>
    <property type="project" value="UniProtKB-UniRule"/>
</dbReference>
<dbReference type="GO" id="GO:0015293">
    <property type="term" value="F:symporter activity"/>
    <property type="evidence" value="ECO:0007669"/>
    <property type="project" value="UniProtKB-UniRule"/>
</dbReference>
<dbReference type="GO" id="GO:0034755">
    <property type="term" value="P:iron ion transmembrane transport"/>
    <property type="evidence" value="ECO:0007669"/>
    <property type="project" value="TreeGrafter"/>
</dbReference>
<dbReference type="HAMAP" id="MF_00221">
    <property type="entry name" value="NRAMP"/>
    <property type="match status" value="1"/>
</dbReference>
<dbReference type="InterPro" id="IPR001046">
    <property type="entry name" value="NRAMP_fam"/>
</dbReference>
<dbReference type="NCBIfam" id="TIGR01197">
    <property type="entry name" value="nramp"/>
    <property type="match status" value="1"/>
</dbReference>
<dbReference type="NCBIfam" id="NF037982">
    <property type="entry name" value="Nramp_1"/>
    <property type="match status" value="1"/>
</dbReference>
<dbReference type="NCBIfam" id="NF001923">
    <property type="entry name" value="PRK00701.1"/>
    <property type="match status" value="1"/>
</dbReference>
<dbReference type="PANTHER" id="PTHR11706:SF33">
    <property type="entry name" value="NATURAL RESISTANCE-ASSOCIATED MACROPHAGE PROTEIN 2"/>
    <property type="match status" value="1"/>
</dbReference>
<dbReference type="PANTHER" id="PTHR11706">
    <property type="entry name" value="SOLUTE CARRIER PROTEIN FAMILY 11 MEMBER"/>
    <property type="match status" value="1"/>
</dbReference>
<dbReference type="Pfam" id="PF01566">
    <property type="entry name" value="Nramp"/>
    <property type="match status" value="1"/>
</dbReference>
<dbReference type="PRINTS" id="PR00447">
    <property type="entry name" value="NATRESASSCMP"/>
</dbReference>
<name>MNTH_YERPY</name>
<keyword id="KW-0997">Cell inner membrane</keyword>
<keyword id="KW-1003">Cell membrane</keyword>
<keyword id="KW-0406">Ion transport</keyword>
<keyword id="KW-0472">Membrane</keyword>
<keyword id="KW-0769">Symport</keyword>
<keyword id="KW-0812">Transmembrane</keyword>
<keyword id="KW-1133">Transmembrane helix</keyword>
<keyword id="KW-0813">Transport</keyword>
<organism>
    <name type="scientific">Yersinia pseudotuberculosis serotype O:3 (strain YPIII)</name>
    <dbReference type="NCBI Taxonomy" id="502800"/>
    <lineage>
        <taxon>Bacteria</taxon>
        <taxon>Pseudomonadati</taxon>
        <taxon>Pseudomonadota</taxon>
        <taxon>Gammaproteobacteria</taxon>
        <taxon>Enterobacterales</taxon>
        <taxon>Yersiniaceae</taxon>
        <taxon>Yersinia</taxon>
    </lineage>
</organism>